<organism evidence="18">
    <name type="scientific">Caenorhabditis elegans</name>
    <dbReference type="NCBI Taxonomy" id="6239"/>
    <lineage>
        <taxon>Eukaryota</taxon>
        <taxon>Metazoa</taxon>
        <taxon>Ecdysozoa</taxon>
        <taxon>Nematoda</taxon>
        <taxon>Chromadorea</taxon>
        <taxon>Rhabditida</taxon>
        <taxon>Rhabditina</taxon>
        <taxon>Rhabditomorpha</taxon>
        <taxon>Rhabditoidea</taxon>
        <taxon>Rhabditidae</taxon>
        <taxon>Peloderinae</taxon>
        <taxon>Caenorhabditis</taxon>
    </lineage>
</organism>
<sequence length="337" mass="38117">MNRFILLALVAAVVAVNSAKLSRQIESAIEKWDDYKEDFDKEYSESEEQTYMEAFVKNMIHIENHNRDHRLGRKTFEMGLNHIADLPFSQYRKLNGYRRLFGDSRIKNSSSFLAPFNVQVPDEVDWRDTHLVTDVKNQGMCGSCWAFSATGALEGQHARKLGQLVSLSEQNLVDCSTKYGNHGCNGGLMDQAFEYIRDNHGVDTEESYPYKGRDMKCHFNKKTVGADDKGYVDTPEGDEEQLKIAVATQGPISIAIDAGHRSFQLYKKGVYYDEECSSEELDHGVLLVGYGTDPEHGDYWIVKNSWGAGWGEKGYIRIARNRNNHCGVATKASYPLV</sequence>
<name>CPL1_CAEEL</name>
<protein>
    <recommendedName>
        <fullName evidence="16">Cathepsin L-like</fullName>
        <ecNumber evidence="2">3.4.22.15</ecNumber>
    </recommendedName>
</protein>
<accession>O45734</accession>
<accession>H9G333</accession>
<comment type="function">
    <text evidence="10 11 14 15">Cysteine protease which plays an essential role in the degradation of proteins in lysosomes (PubMed:15456850, PubMed:24829385). During early embryogenesis, maternally required for the proteolytic processing of yolk proteins in platelets, a lysosome-like structure where a slow and controlled degradation of yolk proteins occurs (PubMed:15456850, PubMed:24829385). In the gonad, required for the clearance of apoptotic germ cells in the engulfing cell phagolysosomes (PubMed:24829385). In embryos, required for the degradation of endocytic and autophagic cargos (PubMed:24829385). In embryos, may play a role in the degradation of lipid-containing droplets (PubMed:26773047). Required for larval development (PubMed:11707440, PubMed:15456850).</text>
</comment>
<comment type="catalytic activity">
    <reaction evidence="2">
        <text>Specificity close to that of papain. As compared to cathepsin B, cathepsin L exhibits higher activity toward protein substrates, but has little activity on Z-Arg-Arg-NHMec, and no peptidyl-dipeptidase activity.</text>
        <dbReference type="EC" id="3.4.22.15"/>
    </reaction>
</comment>
<comment type="interaction">
    <interactant intactId="EBI-315958">
        <id>O45734</id>
    </interactant>
    <interactant intactId="EBI-318513">
        <id>Q9U9Y8</id>
        <label>lit-1</label>
    </interactant>
    <organismsDiffer>false</organismsDiffer>
    <experiments>2</experiments>
</comment>
<comment type="subcellular location">
    <subcellularLocation>
        <location evidence="10 11 12">Secreted</location>
    </subcellularLocation>
    <subcellularLocation>
        <location evidence="11 12">Cytoplasmic granule</location>
    </subcellularLocation>
    <subcellularLocation>
        <location evidence="13 14">Lysosome</location>
    </subcellularLocation>
    <subcellularLocation>
        <location evidence="13">Endosome</location>
    </subcellularLocation>
    <subcellularLocation>
        <location evidence="14">Cytoplasmic vesicle</location>
        <location evidence="14">Phagosome</location>
    </subcellularLocation>
    <text evidence="11 12 14">The zymogen form localizes to yolk platelets/granules in the developing oocyte and in the pseudocoelom (PubMed:15456850, PubMed:16857685). Following cell corpse phagocytosis, recruited to phagosomes during the late stages of phagolysosome formation (PubMed:24829385).</text>
</comment>
<comment type="alternative products">
    <event type="alternative splicing"/>
    <isoform>
        <id>O45734-1</id>
        <name evidence="19">a</name>
        <sequence type="displayed"/>
    </isoform>
    <isoform>
        <id>O45734-2</id>
        <name evidence="20">b</name>
        <sequence type="described" ref="VSP_060182"/>
    </isoform>
</comment>
<comment type="tissue specificity">
    <text evidence="10 12 14">Expressed in intestine, pharynx posterior bulb, hypodermis and cuticle (at protein level) (PubMed:11707440, PubMed:24829385). Expressed in germ cells, developing oocytes, sheath cells surrounding germ cells and oocytes, and in the eggshell (at protein level) (PubMed:11707440, PubMed:16857685).</text>
</comment>
<comment type="developmental stage">
    <text evidence="10 11 12 14">Expressed in embryos, larvae and adults (at protein level) (PubMed:11707440, PubMed:15456850, PubMed:16857685, PubMed:24829385). Expression transiently increases during early embryonic stages and prior to the larval L1/L2, L2/L3, L3/L4 and L4/adult molts (PubMed:11707440, PubMed:16857685). Highest expression in adults (PubMed:11707440). In embryos, expressed in gut cells (PubMed:11707440). In larvae, expressed in the hypodermis, intestine and pharyngeal lining (PubMed:11707440). In molting larvae, expressed in the old and new cuticle (PubMed:11707440).</text>
</comment>
<comment type="disruption phenotype">
    <text evidence="10">RNAi-mediated knockdown causes early embryonic lethality with embryos arrested at the 100-200 cell stage (PubMed:11707440). The few larvae which survive have incomplete gut development and die at the L1 stage (PubMed:11707440). RNAi-mediated knockdown at the L3 larval stage causes a growth delay, adults are shorter and thinner, and lay fewer eggs (PubMed:11707440).</text>
</comment>
<comment type="similarity">
    <text evidence="4 9">Belongs to the peptidase C1 family.</text>
</comment>
<reference evidence="18" key="1">
    <citation type="journal article" date="1998" name="Science">
        <title>Genome sequence of the nematode C. elegans: a platform for investigating biology.</title>
        <authorList>
            <consortium name="The C. elegans sequencing consortium"/>
        </authorList>
    </citation>
    <scope>NUCLEOTIDE SEQUENCE [LARGE SCALE GENOMIC DNA]</scope>
    <source>
        <strain evidence="18">Bristol N2</strain>
    </source>
</reference>
<reference evidence="17" key="2">
    <citation type="journal article" date="2002" name="J. Biol. Chem.">
        <title>Cathepsin L is essential for embryogenesis and development of Caenorhabditis elegans.</title>
        <authorList>
            <person name="Hashmi S."/>
            <person name="Britton C."/>
            <person name="Liu J."/>
            <person name="Guiliano D.B."/>
            <person name="Oksov Y."/>
            <person name="Lustigman S."/>
        </authorList>
    </citation>
    <scope>FUNCTION</scope>
    <scope>SUBCELLULAR LOCATION</scope>
    <scope>TISSUE SPECIFICITY</scope>
    <scope>DEVELOPMENTAL STAGE</scope>
    <scope>DISRUPTION PHENOTYPE</scope>
</reference>
<reference evidence="17" key="3">
    <citation type="journal article" date="2004" name="J. Cell Sci.">
        <title>Cathepsin L protease (CPL-1) is essential for yolk processing during embryogenesis in Caenorhabditis elegans.</title>
        <authorList>
            <person name="Britton C."/>
            <person name="Murray L."/>
        </authorList>
    </citation>
    <scope>FUNCTION</scope>
    <scope>SUBCELLULAR LOCATION</scope>
    <scope>DEVELOPMENTAL STAGE</scope>
    <scope>MUTAGENESIS OF 120-VAL--LYS-268</scope>
</reference>
<reference evidence="17" key="4">
    <citation type="journal article" date="2006" name="J. Biol. Chem.">
        <title>The Caenorhabditis elegans CPI-2a cystatin-like inhibitor has an essential regulatory role during oogenesis and fertilization.</title>
        <authorList>
            <person name="Hashmi S."/>
            <person name="Zhang J."/>
            <person name="Oksov Y."/>
            <person name="Ji Q."/>
            <person name="Lustigman S."/>
        </authorList>
    </citation>
    <scope>SUBCELLULAR LOCATION</scope>
    <scope>TISSUE SPECIFICITY</scope>
    <scope>DEVELOPMENTAL STAGE</scope>
</reference>
<reference evidence="17" key="5">
    <citation type="journal article" date="2012" name="PLoS ONE">
        <title>A pro-cathepsin L mutant is a luminal substrate for endoplasmic-reticulum-associated degradation in C. elegans.</title>
        <authorList>
            <person name="Miedel M.T."/>
            <person name="Graf N.J."/>
            <person name="Stephen K.E."/>
            <person name="Long O.S."/>
            <person name="Pak S.C."/>
            <person name="Perlmutter D.H."/>
            <person name="Silverman G.A."/>
            <person name="Luke C.J."/>
        </authorList>
    </citation>
    <scope>SUBCELLULAR LOCATION</scope>
    <scope>MUTAGENESIS OF TRP-32 AND TYR-35</scope>
</reference>
<reference evidence="17" key="6">
    <citation type="journal article" date="2014" name="Mol. Biol. Cell">
        <title>The lysosomal cathepsin protease CPL-1 plays a leading role in phagosomal degradation of apoptotic cells in Caenorhabditis elegans.</title>
        <authorList>
            <person name="Xu M."/>
            <person name="Liu Y."/>
            <person name="Zhao L."/>
            <person name="Gan Q."/>
            <person name="Wang X."/>
            <person name="Yang C."/>
        </authorList>
    </citation>
    <scope>FUNCTION</scope>
    <scope>SUBCELLULAR LOCATION</scope>
    <scope>TISSUE SPECIFICITY</scope>
    <scope>DEVELOPMENTAL STAGE</scope>
    <scope>MUTAGENESIS OF 1-MET--TYR-51; GLY-230 AND 120-VAL--LYS-268</scope>
</reference>
<reference evidence="17" key="7">
    <citation type="journal article" date="2016" name="Genetics">
        <title>Genetics of Lipid-Storage Management in Caenorhabditis elegans Embryos.</title>
        <authorList>
            <person name="Schmoekel V."/>
            <person name="Memar N."/>
            <person name="Wiekenberg A."/>
            <person name="Trotzmueller M."/>
            <person name="Schnabel R."/>
            <person name="Doering F."/>
        </authorList>
    </citation>
    <scope>FUNCTION</scope>
    <scope>MUTAGENESIS OF ALA-146 AND ARG-320</scope>
</reference>
<gene>
    <name evidence="16 19" type="primary">cpl-1</name>
    <name evidence="19" type="ORF">T03E6.7</name>
</gene>
<proteinExistence type="evidence at protein level"/>
<keyword id="KW-0025">Alternative splicing</keyword>
<keyword id="KW-0968">Cytoplasmic vesicle</keyword>
<keyword id="KW-1015">Disulfide bond</keyword>
<keyword id="KW-0967">Endosome</keyword>
<keyword id="KW-0325">Glycoprotein</keyword>
<keyword id="KW-0378">Hydrolase</keyword>
<keyword id="KW-0458">Lysosome</keyword>
<keyword id="KW-0645">Protease</keyword>
<keyword id="KW-1185">Reference proteome</keyword>
<keyword id="KW-0964">Secreted</keyword>
<keyword id="KW-0732">Signal</keyword>
<keyword id="KW-0788">Thiol protease</keyword>
<keyword id="KW-0865">Zymogen</keyword>
<feature type="signal peptide" evidence="4">
    <location>
        <begin position="1"/>
        <end position="18"/>
    </location>
</feature>
<feature type="propeptide" id="PRO_0000447317" description="Activation peptide" evidence="3">
    <location>
        <begin position="19"/>
        <end position="119"/>
    </location>
</feature>
<feature type="chain" id="PRO_5005399912" description="Cathepsin L-like" evidence="4">
    <location>
        <begin position="120"/>
        <end position="337"/>
    </location>
</feature>
<feature type="active site" evidence="6">
    <location>
        <position position="144"/>
    </location>
</feature>
<feature type="active site" evidence="7">
    <location>
        <position position="283"/>
    </location>
</feature>
<feature type="active site" evidence="8">
    <location>
        <position position="304"/>
    </location>
</feature>
<feature type="glycosylation site" description="N-linked (GlcNAc...) asparagine" evidence="5">
    <location>
        <position position="108"/>
    </location>
</feature>
<feature type="disulfide bond" evidence="1">
    <location>
        <begin position="141"/>
        <end position="184"/>
    </location>
</feature>
<feature type="disulfide bond" evidence="1">
    <location>
        <begin position="175"/>
        <end position="217"/>
    </location>
</feature>
<feature type="disulfide bond" evidence="1">
    <location>
        <begin position="276"/>
        <end position="326"/>
    </location>
</feature>
<feature type="splice variant" id="VSP_060182" description="In isoform b." evidence="17">
    <location>
        <begin position="1"/>
        <end position="139"/>
    </location>
</feature>
<feature type="mutagenesis site" description="In qx304; temperature sensitive. At the restrictive temperature of 25 degrees Celsius, causes an accumulation of germ cell corpses in the gonad in an age-dependent manner. In embryos, accumulation of abnormally processed yolk proteins, and of endocytic and autophagic cargos. Does not affect lysosomal localization." evidence="14">
    <location>
        <begin position="1"/>
        <end position="51"/>
    </location>
</feature>
<feature type="mutagenesis site" description="Probably causes cpl-1 misfolding resulting in its accumulation within the ER and loss of endolysosome localization; when associated with A-35." evidence="13">
    <original>W</original>
    <variation>A</variation>
    <location>
        <position position="32"/>
    </location>
</feature>
<feature type="mutagenesis site" description="Probably causes cpl-1 misfolding resulting in its accumulation within the ER and loss of endolysosome localization; when associated with A-32." evidence="13">
    <original>Y</original>
    <variation>A</variation>
    <location>
        <position position="35"/>
    </location>
</feature>
<feature type="mutagenesis site" description="In ok360; 25 percent of F1 progeny die at the embryonic stage. Embryos are arrested at the 100-150 cell stage and fail to undergo morphogenesis. Accumulation of abnormally processed yolk proteins in large cytoplasmic vesicles and delay in the degradation/recycling of the yolk protein receptor rme-2. In the gonad, fails to eliminate germ cell corpses in an age-dependent manner." evidence="11 14">
    <location>
        <begin position="120"/>
        <end position="268"/>
    </location>
</feature>
<feature type="mutagenesis site" description="In t3438; temperature sensitive. Embryonic lethal at the restrictive temperature of 25 degrees Celsius. In oocytes and embryos, causes an intracellular accumulation of enlarged neutral lipid-containing droplets." evidence="15">
    <original>A</original>
    <variation>V</variation>
    <location>
        <position position="146"/>
    </location>
</feature>
<feature type="mutagenesis site" description="In yq89; temperature sensitive. At the restrictive temperature of 25 degrees Celsius, causes an accumulation of germ cell corpses in the gonad in an age-dependent manner. Accumulation of abnormally processed yolk proteins. Does not affect lysosomal localization." evidence="14">
    <original>G</original>
    <variation>R</variation>
    <location>
        <position position="230"/>
    </location>
</feature>
<feature type="mutagenesis site" description="In t3423; temperature sensitive. Embryonic lethal at the restrictive temperature of 25 degrees Celsius. In oocytes and embryos, causes an intracellular accumulation of enlarged neutral lipid-containing droplets." evidence="15">
    <original>R</original>
    <variation>C</variation>
    <location>
        <position position="320"/>
    </location>
</feature>
<evidence type="ECO:0000250" key="1">
    <source>
        <dbReference type="UniProtKB" id="O17473"/>
    </source>
</evidence>
<evidence type="ECO:0000250" key="2">
    <source>
        <dbReference type="UniProtKB" id="P06797"/>
    </source>
</evidence>
<evidence type="ECO:0000250" key="3">
    <source>
        <dbReference type="UniProtKB" id="P07711"/>
    </source>
</evidence>
<evidence type="ECO:0000255" key="4"/>
<evidence type="ECO:0000255" key="5">
    <source>
        <dbReference type="PROSITE-ProRule" id="PRU00498"/>
    </source>
</evidence>
<evidence type="ECO:0000255" key="6">
    <source>
        <dbReference type="PROSITE-ProRule" id="PRU10088"/>
    </source>
</evidence>
<evidence type="ECO:0000255" key="7">
    <source>
        <dbReference type="PROSITE-ProRule" id="PRU10089"/>
    </source>
</evidence>
<evidence type="ECO:0000255" key="8">
    <source>
        <dbReference type="PROSITE-ProRule" id="PRU10090"/>
    </source>
</evidence>
<evidence type="ECO:0000255" key="9">
    <source>
        <dbReference type="RuleBase" id="RU362133"/>
    </source>
</evidence>
<evidence type="ECO:0000269" key="10">
    <source>
    </source>
</evidence>
<evidence type="ECO:0000269" key="11">
    <source>
    </source>
</evidence>
<evidence type="ECO:0000269" key="12">
    <source>
    </source>
</evidence>
<evidence type="ECO:0000269" key="13">
    <source>
    </source>
</evidence>
<evidence type="ECO:0000269" key="14">
    <source>
    </source>
</evidence>
<evidence type="ECO:0000269" key="15">
    <source>
    </source>
</evidence>
<evidence type="ECO:0000303" key="16">
    <source>
    </source>
</evidence>
<evidence type="ECO:0000305" key="17"/>
<evidence type="ECO:0000312" key="18">
    <source>
        <dbReference type="Proteomes" id="UP000001940"/>
    </source>
</evidence>
<evidence type="ECO:0000312" key="19">
    <source>
        <dbReference type="WormBase" id="T03E6.7a"/>
    </source>
</evidence>
<evidence type="ECO:0000312" key="20">
    <source>
        <dbReference type="WormBase" id="T03E6.7b"/>
    </source>
</evidence>
<dbReference type="EC" id="3.4.22.15" evidence="2"/>
<dbReference type="EMBL" id="BX284605">
    <property type="protein sequence ID" value="CAB07275.1"/>
    <property type="molecule type" value="Genomic_DNA"/>
</dbReference>
<dbReference type="EMBL" id="BX284605">
    <property type="protein sequence ID" value="CCG28194.1"/>
    <property type="molecule type" value="Genomic_DNA"/>
</dbReference>
<dbReference type="PIR" id="T24387">
    <property type="entry name" value="T24387"/>
</dbReference>
<dbReference type="RefSeq" id="NP_001256718.1">
    <molecule id="O45734-1"/>
    <property type="nucleotide sequence ID" value="NM_001269789.4"/>
</dbReference>
<dbReference type="RefSeq" id="NP_001256719.1">
    <molecule id="O45734-2"/>
    <property type="nucleotide sequence ID" value="NM_001269790.3"/>
</dbReference>
<dbReference type="SMR" id="O45734"/>
<dbReference type="DIP" id="DIP-26616N"/>
<dbReference type="FunCoup" id="O45734">
    <property type="interactions" value="1538"/>
</dbReference>
<dbReference type="IntAct" id="O45734">
    <property type="interactions" value="8"/>
</dbReference>
<dbReference type="MINT" id="O45734"/>
<dbReference type="STRING" id="6239.T03E6.7a.1"/>
<dbReference type="MEROPS" id="C01.141"/>
<dbReference type="GlyCosmos" id="O45734">
    <property type="glycosylation" value="1 site, No reported glycans"/>
</dbReference>
<dbReference type="PaxDb" id="6239-T03E6.7a"/>
<dbReference type="PeptideAtlas" id="O45734"/>
<dbReference type="EnsemblMetazoa" id="T03E6.7a.1">
    <molecule id="O45734-1"/>
    <property type="protein sequence ID" value="T03E6.7a.1"/>
    <property type="gene ID" value="WBGene00000776"/>
</dbReference>
<dbReference type="EnsemblMetazoa" id="T03E6.7b.1">
    <molecule id="O45734-2"/>
    <property type="protein sequence ID" value="T03E6.7b.1"/>
    <property type="gene ID" value="WBGene00000776"/>
</dbReference>
<dbReference type="GeneID" id="180111"/>
<dbReference type="KEGG" id="cel:CELE_T03E6.7"/>
<dbReference type="UCSC" id="T03E6.7.1">
    <molecule id="O45734-1"/>
    <property type="organism name" value="c. elegans"/>
</dbReference>
<dbReference type="AGR" id="WB:WBGene00000776"/>
<dbReference type="CTD" id="180111"/>
<dbReference type="WormBase" id="T03E6.7a">
    <molecule id="O45734-1"/>
    <property type="protein sequence ID" value="CE16333"/>
    <property type="gene ID" value="WBGene00000776"/>
    <property type="gene designation" value="cpl-1"/>
</dbReference>
<dbReference type="WormBase" id="T03E6.7b">
    <molecule id="O45734-2"/>
    <property type="protein sequence ID" value="CE47424"/>
    <property type="gene ID" value="WBGene00000776"/>
    <property type="gene designation" value="cpl-1"/>
</dbReference>
<dbReference type="eggNOG" id="KOG1543">
    <property type="taxonomic scope" value="Eukaryota"/>
</dbReference>
<dbReference type="GeneTree" id="ENSGT00940000153321"/>
<dbReference type="HOGENOM" id="CLU_012184_1_2_1"/>
<dbReference type="InParanoid" id="O45734"/>
<dbReference type="OMA" id="VYYDEEC"/>
<dbReference type="OrthoDB" id="10253408at2759"/>
<dbReference type="PhylomeDB" id="O45734"/>
<dbReference type="Reactome" id="R-CEL-1474228">
    <property type="pathway name" value="Degradation of the extracellular matrix"/>
</dbReference>
<dbReference type="Reactome" id="R-CEL-1592389">
    <property type="pathway name" value="Activation of Matrix Metalloproteinases"/>
</dbReference>
<dbReference type="Reactome" id="R-CEL-2132295">
    <property type="pathway name" value="MHC class II antigen presentation"/>
</dbReference>
<dbReference type="Reactome" id="R-CEL-6798695">
    <property type="pathway name" value="Neutrophil degranulation"/>
</dbReference>
<dbReference type="Reactome" id="R-CEL-8939242">
    <property type="pathway name" value="RUNX1 regulates transcription of genes involved in differentiation of keratinocytes"/>
</dbReference>
<dbReference type="SignaLink" id="O45734"/>
<dbReference type="PRO" id="PR:O45734"/>
<dbReference type="Proteomes" id="UP000001940">
    <property type="component" value="Chromosome V"/>
</dbReference>
<dbReference type="Bgee" id="WBGene00000776">
    <property type="expression patterns" value="Expressed in adult organism and 4 other cell types or tissues"/>
</dbReference>
<dbReference type="GO" id="GO:0005737">
    <property type="term" value="C:cytoplasm"/>
    <property type="evidence" value="ECO:0000314"/>
    <property type="project" value="UniProtKB"/>
</dbReference>
<dbReference type="GO" id="GO:0036019">
    <property type="term" value="C:endolysosome"/>
    <property type="evidence" value="ECO:0000314"/>
    <property type="project" value="UniProtKB"/>
</dbReference>
<dbReference type="GO" id="GO:0005615">
    <property type="term" value="C:extracellular space"/>
    <property type="evidence" value="ECO:0000314"/>
    <property type="project" value="UniProtKB"/>
</dbReference>
<dbReference type="GO" id="GO:0005764">
    <property type="term" value="C:lysosome"/>
    <property type="evidence" value="ECO:0000318"/>
    <property type="project" value="GO_Central"/>
</dbReference>
<dbReference type="GO" id="GO:0032010">
    <property type="term" value="C:phagolysosome"/>
    <property type="evidence" value="ECO:0000314"/>
    <property type="project" value="UniProtKB"/>
</dbReference>
<dbReference type="GO" id="GO:0031983">
    <property type="term" value="C:vesicle lumen"/>
    <property type="evidence" value="ECO:0000314"/>
    <property type="project" value="WormBase"/>
</dbReference>
<dbReference type="GO" id="GO:0042718">
    <property type="term" value="C:yolk granule"/>
    <property type="evidence" value="ECO:0000314"/>
    <property type="project" value="UniProtKB"/>
</dbReference>
<dbReference type="GO" id="GO:0008656">
    <property type="term" value="F:cysteine-type endopeptidase activator activity involved in apoptotic process"/>
    <property type="evidence" value="ECO:0000318"/>
    <property type="project" value="GO_Central"/>
</dbReference>
<dbReference type="GO" id="GO:0004197">
    <property type="term" value="F:cysteine-type endopeptidase activity"/>
    <property type="evidence" value="ECO:0000318"/>
    <property type="project" value="GO_Central"/>
</dbReference>
<dbReference type="GO" id="GO:0043277">
    <property type="term" value="P:apoptotic cell clearance"/>
    <property type="evidence" value="ECO:0000315"/>
    <property type="project" value="UniProtKB"/>
</dbReference>
<dbReference type="GO" id="GO:0006955">
    <property type="term" value="P:immune response"/>
    <property type="evidence" value="ECO:0000318"/>
    <property type="project" value="GO_Central"/>
</dbReference>
<dbReference type="GO" id="GO:1905691">
    <property type="term" value="P:lipid droplet disassembly"/>
    <property type="evidence" value="ECO:0000315"/>
    <property type="project" value="UniProtKB"/>
</dbReference>
<dbReference type="GO" id="GO:2001235">
    <property type="term" value="P:positive regulation of apoptotic signaling pathway"/>
    <property type="evidence" value="ECO:0000318"/>
    <property type="project" value="GO_Central"/>
</dbReference>
<dbReference type="GO" id="GO:1903188">
    <property type="term" value="P:positive regulation of vitellogenesis"/>
    <property type="evidence" value="ECO:0000315"/>
    <property type="project" value="UniProtKB"/>
</dbReference>
<dbReference type="GO" id="GO:0051603">
    <property type="term" value="P:proteolysis involved in protein catabolic process"/>
    <property type="evidence" value="ECO:0000318"/>
    <property type="project" value="GO_Central"/>
</dbReference>
<dbReference type="GO" id="GO:0060785">
    <property type="term" value="P:regulation of apoptosis involved in tissue homeostasis"/>
    <property type="evidence" value="ECO:0000315"/>
    <property type="project" value="UniProtKB"/>
</dbReference>
<dbReference type="GO" id="GO:0070613">
    <property type="term" value="P:regulation of protein processing"/>
    <property type="evidence" value="ECO:0000315"/>
    <property type="project" value="UniProtKB"/>
</dbReference>
<dbReference type="CDD" id="cd02248">
    <property type="entry name" value="Peptidase_C1A"/>
    <property type="match status" value="1"/>
</dbReference>
<dbReference type="FunFam" id="2.40.50.170:FF:000001">
    <property type="entry name" value="Cathepsin L1"/>
    <property type="match status" value="1"/>
</dbReference>
<dbReference type="FunFam" id="3.90.70.10:FF:000006">
    <property type="entry name" value="Cathepsin S"/>
    <property type="match status" value="1"/>
</dbReference>
<dbReference type="Gene3D" id="3.90.70.10">
    <property type="entry name" value="Cysteine proteinases"/>
    <property type="match status" value="1"/>
</dbReference>
<dbReference type="InterPro" id="IPR038765">
    <property type="entry name" value="Papain-like_cys_pep_sf"/>
</dbReference>
<dbReference type="InterPro" id="IPR025661">
    <property type="entry name" value="Pept_asp_AS"/>
</dbReference>
<dbReference type="InterPro" id="IPR000169">
    <property type="entry name" value="Pept_cys_AS"/>
</dbReference>
<dbReference type="InterPro" id="IPR025660">
    <property type="entry name" value="Pept_his_AS"/>
</dbReference>
<dbReference type="InterPro" id="IPR013128">
    <property type="entry name" value="Peptidase_C1A"/>
</dbReference>
<dbReference type="InterPro" id="IPR000668">
    <property type="entry name" value="Peptidase_C1A_C"/>
</dbReference>
<dbReference type="InterPro" id="IPR039417">
    <property type="entry name" value="Peptidase_C1A_papain-like"/>
</dbReference>
<dbReference type="InterPro" id="IPR013201">
    <property type="entry name" value="Prot_inhib_I29"/>
</dbReference>
<dbReference type="PANTHER" id="PTHR12411">
    <property type="entry name" value="CYSTEINE PROTEASE FAMILY C1-RELATED"/>
    <property type="match status" value="1"/>
</dbReference>
<dbReference type="Pfam" id="PF08246">
    <property type="entry name" value="Inhibitor_I29"/>
    <property type="match status" value="1"/>
</dbReference>
<dbReference type="Pfam" id="PF00112">
    <property type="entry name" value="Peptidase_C1"/>
    <property type="match status" value="1"/>
</dbReference>
<dbReference type="PRINTS" id="PR00705">
    <property type="entry name" value="PAPAIN"/>
</dbReference>
<dbReference type="SMART" id="SM00848">
    <property type="entry name" value="Inhibitor_I29"/>
    <property type="match status" value="1"/>
</dbReference>
<dbReference type="SMART" id="SM00645">
    <property type="entry name" value="Pept_C1"/>
    <property type="match status" value="1"/>
</dbReference>
<dbReference type="SUPFAM" id="SSF54001">
    <property type="entry name" value="Cysteine proteinases"/>
    <property type="match status" value="1"/>
</dbReference>
<dbReference type="PROSITE" id="PS00640">
    <property type="entry name" value="THIOL_PROTEASE_ASN"/>
    <property type="match status" value="1"/>
</dbReference>
<dbReference type="PROSITE" id="PS00139">
    <property type="entry name" value="THIOL_PROTEASE_CYS"/>
    <property type="match status" value="1"/>
</dbReference>
<dbReference type="PROSITE" id="PS00639">
    <property type="entry name" value="THIOL_PROTEASE_HIS"/>
    <property type="match status" value="1"/>
</dbReference>